<name>ASTB_SHEAM</name>
<evidence type="ECO:0000255" key="1">
    <source>
        <dbReference type="HAMAP-Rule" id="MF_01172"/>
    </source>
</evidence>
<feature type="chain" id="PRO_1000065735" description="N-succinylarginine dihydrolase">
    <location>
        <begin position="1"/>
        <end position="444"/>
    </location>
</feature>
<feature type="active site" evidence="1">
    <location>
        <position position="174"/>
    </location>
</feature>
<feature type="active site" evidence="1">
    <location>
        <position position="250"/>
    </location>
</feature>
<feature type="active site" description="Nucleophile" evidence="1">
    <location>
        <position position="368"/>
    </location>
</feature>
<feature type="binding site" evidence="1">
    <location>
        <begin position="19"/>
        <end position="28"/>
    </location>
    <ligand>
        <name>substrate</name>
    </ligand>
</feature>
<feature type="binding site" evidence="1">
    <location>
        <position position="110"/>
    </location>
    <ligand>
        <name>substrate</name>
    </ligand>
</feature>
<feature type="binding site" evidence="1">
    <location>
        <begin position="137"/>
        <end position="138"/>
    </location>
    <ligand>
        <name>substrate</name>
    </ligand>
</feature>
<feature type="binding site" evidence="1">
    <location>
        <position position="214"/>
    </location>
    <ligand>
        <name>substrate</name>
    </ligand>
</feature>
<feature type="binding site" evidence="1">
    <location>
        <position position="252"/>
    </location>
    <ligand>
        <name>substrate</name>
    </ligand>
</feature>
<feature type="binding site" evidence="1">
    <location>
        <position position="362"/>
    </location>
    <ligand>
        <name>substrate</name>
    </ligand>
</feature>
<protein>
    <recommendedName>
        <fullName evidence="1">N-succinylarginine dihydrolase</fullName>
        <ecNumber evidence="1">3.5.3.23</ecNumber>
    </recommendedName>
</protein>
<comment type="function">
    <text evidence="1">Catalyzes the hydrolysis of N(2)-succinylarginine into N(2)-succinylornithine, ammonia and CO(2).</text>
</comment>
<comment type="catalytic activity">
    <reaction evidence="1">
        <text>N(2)-succinyl-L-arginine + 2 H2O + 2 H(+) = N(2)-succinyl-L-ornithine + 2 NH4(+) + CO2</text>
        <dbReference type="Rhea" id="RHEA:19533"/>
        <dbReference type="ChEBI" id="CHEBI:15377"/>
        <dbReference type="ChEBI" id="CHEBI:15378"/>
        <dbReference type="ChEBI" id="CHEBI:16526"/>
        <dbReference type="ChEBI" id="CHEBI:28938"/>
        <dbReference type="ChEBI" id="CHEBI:58241"/>
        <dbReference type="ChEBI" id="CHEBI:58514"/>
        <dbReference type="EC" id="3.5.3.23"/>
    </reaction>
</comment>
<comment type="pathway">
    <text evidence="1">Amino-acid degradation; L-arginine degradation via AST pathway; L-glutamate and succinate from L-arginine: step 2/5.</text>
</comment>
<comment type="subunit">
    <text evidence="1">Homodimer.</text>
</comment>
<comment type="similarity">
    <text evidence="1">Belongs to the succinylarginine dihydrolase family.</text>
</comment>
<proteinExistence type="inferred from homology"/>
<keyword id="KW-0056">Arginine metabolism</keyword>
<keyword id="KW-0378">Hydrolase</keyword>
<keyword id="KW-1185">Reference proteome</keyword>
<gene>
    <name evidence="1" type="primary">astB</name>
    <name type="ordered locus">Sama_1321</name>
</gene>
<accession>A1S572</accession>
<organism>
    <name type="scientific">Shewanella amazonensis (strain ATCC BAA-1098 / SB2B)</name>
    <dbReference type="NCBI Taxonomy" id="326297"/>
    <lineage>
        <taxon>Bacteria</taxon>
        <taxon>Pseudomonadati</taxon>
        <taxon>Pseudomonadota</taxon>
        <taxon>Gammaproteobacteria</taxon>
        <taxon>Alteromonadales</taxon>
        <taxon>Shewanellaceae</taxon>
        <taxon>Shewanella</taxon>
    </lineage>
</organism>
<dbReference type="EC" id="3.5.3.23" evidence="1"/>
<dbReference type="EMBL" id="CP000507">
    <property type="protein sequence ID" value="ABL99528.1"/>
    <property type="molecule type" value="Genomic_DNA"/>
</dbReference>
<dbReference type="RefSeq" id="WP_011759436.1">
    <property type="nucleotide sequence ID" value="NC_008700.1"/>
</dbReference>
<dbReference type="SMR" id="A1S572"/>
<dbReference type="STRING" id="326297.Sama_1321"/>
<dbReference type="KEGG" id="saz:Sama_1321"/>
<dbReference type="eggNOG" id="COG3724">
    <property type="taxonomic scope" value="Bacteria"/>
</dbReference>
<dbReference type="HOGENOM" id="CLU_053835_0_0_6"/>
<dbReference type="OrthoDB" id="248552at2"/>
<dbReference type="UniPathway" id="UPA00185">
    <property type="reaction ID" value="UER00280"/>
</dbReference>
<dbReference type="Proteomes" id="UP000009175">
    <property type="component" value="Chromosome"/>
</dbReference>
<dbReference type="GO" id="GO:0009015">
    <property type="term" value="F:N-succinylarginine dihydrolase activity"/>
    <property type="evidence" value="ECO:0007669"/>
    <property type="project" value="UniProtKB-UniRule"/>
</dbReference>
<dbReference type="GO" id="GO:0019544">
    <property type="term" value="P:arginine catabolic process to glutamate"/>
    <property type="evidence" value="ECO:0007669"/>
    <property type="project" value="UniProtKB-UniRule"/>
</dbReference>
<dbReference type="GO" id="GO:0019545">
    <property type="term" value="P:arginine catabolic process to succinate"/>
    <property type="evidence" value="ECO:0007669"/>
    <property type="project" value="UniProtKB-UniRule"/>
</dbReference>
<dbReference type="Gene3D" id="3.75.10.20">
    <property type="entry name" value="Succinylarginine dihydrolase"/>
    <property type="match status" value="1"/>
</dbReference>
<dbReference type="HAMAP" id="MF_01172">
    <property type="entry name" value="AstB"/>
    <property type="match status" value="1"/>
</dbReference>
<dbReference type="InterPro" id="IPR037031">
    <property type="entry name" value="AstB_sf"/>
</dbReference>
<dbReference type="InterPro" id="IPR007079">
    <property type="entry name" value="SuccinylArg_d-Hdrlase_AstB"/>
</dbReference>
<dbReference type="NCBIfam" id="TIGR03241">
    <property type="entry name" value="arg_catab_astB"/>
    <property type="match status" value="1"/>
</dbReference>
<dbReference type="NCBIfam" id="NF009789">
    <property type="entry name" value="PRK13281.1"/>
    <property type="match status" value="1"/>
</dbReference>
<dbReference type="PANTHER" id="PTHR30420">
    <property type="entry name" value="N-SUCCINYLARGININE DIHYDROLASE"/>
    <property type="match status" value="1"/>
</dbReference>
<dbReference type="PANTHER" id="PTHR30420:SF2">
    <property type="entry name" value="N-SUCCINYLARGININE DIHYDROLASE"/>
    <property type="match status" value="1"/>
</dbReference>
<dbReference type="Pfam" id="PF04996">
    <property type="entry name" value="AstB"/>
    <property type="match status" value="1"/>
</dbReference>
<dbReference type="SUPFAM" id="SSF55909">
    <property type="entry name" value="Pentein"/>
    <property type="match status" value="1"/>
</dbReference>
<sequence length="444" mass="48879">MKHFEANFDGLVGPTHNYAGLSFGNVASQSNAAQVSNPKDAAKQGLKKAKALADMGMVQGMLAPQERPDIHTLRRVGFTGSDADVLSQAAKASPVLLQACASASSMWTANAATVSPSADSDDGKLHFTPANLVDKLHRSIEPVTTGNILKAIFTDERYFAHHQHLPEHPHFGDEGAANHTRLCHDYGQAGVEVFVYGRSVADLSRPAPVKYPARQTLEASQAVARLHQLSDDRTVYMQQNPDVIDQGVFHNDVIAVGNQNVLFYHEQAFLETQAKLAEIDKKMHGNMYFIEVPTAKVSVQDAVKSYLFNTQIITLSDGNMAIIAPTDCQENPAVHAYLNELVTLNTPIKAVHYFDVKQSMQNGGGPACLRLRVAMNETELAAVNPQVMMNDALFARLNQWVDKHYRDRLSTQDLADPQLLMESRTALDELTQIMKLGSVYQFQR</sequence>
<reference key="1">
    <citation type="submission" date="2006-12" db="EMBL/GenBank/DDBJ databases">
        <title>Complete sequence of Shewanella amazonensis SB2B.</title>
        <authorList>
            <consortium name="US DOE Joint Genome Institute"/>
            <person name="Copeland A."/>
            <person name="Lucas S."/>
            <person name="Lapidus A."/>
            <person name="Barry K."/>
            <person name="Detter J.C."/>
            <person name="Glavina del Rio T."/>
            <person name="Hammon N."/>
            <person name="Israni S."/>
            <person name="Dalin E."/>
            <person name="Tice H."/>
            <person name="Pitluck S."/>
            <person name="Munk A.C."/>
            <person name="Brettin T."/>
            <person name="Bruce D."/>
            <person name="Han C."/>
            <person name="Tapia R."/>
            <person name="Gilna P."/>
            <person name="Schmutz J."/>
            <person name="Larimer F."/>
            <person name="Land M."/>
            <person name="Hauser L."/>
            <person name="Kyrpides N."/>
            <person name="Mikhailova N."/>
            <person name="Fredrickson J."/>
            <person name="Richardson P."/>
        </authorList>
    </citation>
    <scope>NUCLEOTIDE SEQUENCE [LARGE SCALE GENOMIC DNA]</scope>
    <source>
        <strain>ATCC BAA-1098 / SB2B</strain>
    </source>
</reference>